<sequence>MNNQDIYINLLNILSKEDIKVDEPMKKHISFRVGGPADILVRPRTEEQLKNVLKLVKEESIPYLIIGNGSNILIKDGGIRGVVIELADNFNSYEINDTRMTAQSGALLSVLGKALQKQELKGFEFASGIPGTLGGALAMNAGAYGGEMKDIVKSVRLMDMEGNIFELSNEQMEFGYRKSIISKNGYIALSAELELQEGNYDEIKSLMDDLATRRITKQPLNFASAGSTFKRPTGYFAGKLIEETGLRGLTLRGAQVSEKHCGFVVNQGEASAKDILDLIYVIKSAVYAKFGVMLEEEVKILGED</sequence>
<protein>
    <recommendedName>
        <fullName evidence="1">UDP-N-acetylenolpyruvoylglucosamine reductase</fullName>
        <ecNumber evidence="1">1.3.1.98</ecNumber>
    </recommendedName>
    <alternativeName>
        <fullName evidence="1">UDP-N-acetylmuramate dehydrogenase</fullName>
    </alternativeName>
</protein>
<dbReference type="EC" id="1.3.1.98" evidence="1"/>
<dbReference type="EMBL" id="AM180355">
    <property type="protein sequence ID" value="CAJ70305.1"/>
    <property type="molecule type" value="Genomic_DNA"/>
</dbReference>
<dbReference type="RefSeq" id="WP_009894000.1">
    <property type="nucleotide sequence ID" value="NZ_JAUPES010000002.1"/>
</dbReference>
<dbReference type="RefSeq" id="YP_001089922.1">
    <property type="nucleotide sequence ID" value="NC_009089.1"/>
</dbReference>
<dbReference type="SMR" id="Q180P9"/>
<dbReference type="STRING" id="272563.CD630_34020"/>
<dbReference type="EnsemblBacteria" id="CAJ70305">
    <property type="protein sequence ID" value="CAJ70305"/>
    <property type="gene ID" value="CD630_34020"/>
</dbReference>
<dbReference type="KEGG" id="cdf:CD630_34020"/>
<dbReference type="KEGG" id="pdc:CDIF630_03707"/>
<dbReference type="PATRIC" id="fig|272563.120.peg.3596"/>
<dbReference type="eggNOG" id="COG0812">
    <property type="taxonomic scope" value="Bacteria"/>
</dbReference>
<dbReference type="OrthoDB" id="9804753at2"/>
<dbReference type="PhylomeDB" id="Q180P9"/>
<dbReference type="BioCyc" id="PDIF272563:G12WB-3576-MONOMER"/>
<dbReference type="UniPathway" id="UPA00219"/>
<dbReference type="Proteomes" id="UP000001978">
    <property type="component" value="Chromosome"/>
</dbReference>
<dbReference type="GO" id="GO:0005829">
    <property type="term" value="C:cytosol"/>
    <property type="evidence" value="ECO:0007669"/>
    <property type="project" value="TreeGrafter"/>
</dbReference>
<dbReference type="GO" id="GO:0071949">
    <property type="term" value="F:FAD binding"/>
    <property type="evidence" value="ECO:0007669"/>
    <property type="project" value="InterPro"/>
</dbReference>
<dbReference type="GO" id="GO:0008762">
    <property type="term" value="F:UDP-N-acetylmuramate dehydrogenase activity"/>
    <property type="evidence" value="ECO:0007669"/>
    <property type="project" value="UniProtKB-UniRule"/>
</dbReference>
<dbReference type="GO" id="GO:0051301">
    <property type="term" value="P:cell division"/>
    <property type="evidence" value="ECO:0007669"/>
    <property type="project" value="UniProtKB-KW"/>
</dbReference>
<dbReference type="GO" id="GO:0071555">
    <property type="term" value="P:cell wall organization"/>
    <property type="evidence" value="ECO:0007669"/>
    <property type="project" value="UniProtKB-KW"/>
</dbReference>
<dbReference type="GO" id="GO:0009252">
    <property type="term" value="P:peptidoglycan biosynthetic process"/>
    <property type="evidence" value="ECO:0007669"/>
    <property type="project" value="UniProtKB-UniRule"/>
</dbReference>
<dbReference type="GO" id="GO:0008360">
    <property type="term" value="P:regulation of cell shape"/>
    <property type="evidence" value="ECO:0007669"/>
    <property type="project" value="UniProtKB-KW"/>
</dbReference>
<dbReference type="Gene3D" id="3.30.465.10">
    <property type="match status" value="1"/>
</dbReference>
<dbReference type="Gene3D" id="3.90.78.10">
    <property type="entry name" value="UDP-N-acetylenolpyruvoylglucosamine reductase, C-terminal domain"/>
    <property type="match status" value="1"/>
</dbReference>
<dbReference type="Gene3D" id="3.30.43.10">
    <property type="entry name" value="Uridine Diphospho-n-acetylenolpyruvylglucosamine Reductase, domain 2"/>
    <property type="match status" value="1"/>
</dbReference>
<dbReference type="HAMAP" id="MF_00037">
    <property type="entry name" value="MurB"/>
    <property type="match status" value="1"/>
</dbReference>
<dbReference type="InterPro" id="IPR016166">
    <property type="entry name" value="FAD-bd_PCMH"/>
</dbReference>
<dbReference type="InterPro" id="IPR036318">
    <property type="entry name" value="FAD-bd_PCMH-like_sf"/>
</dbReference>
<dbReference type="InterPro" id="IPR016167">
    <property type="entry name" value="FAD-bd_PCMH_sub1"/>
</dbReference>
<dbReference type="InterPro" id="IPR016169">
    <property type="entry name" value="FAD-bd_PCMH_sub2"/>
</dbReference>
<dbReference type="InterPro" id="IPR003170">
    <property type="entry name" value="MurB"/>
</dbReference>
<dbReference type="InterPro" id="IPR011601">
    <property type="entry name" value="MurB_C"/>
</dbReference>
<dbReference type="InterPro" id="IPR036635">
    <property type="entry name" value="MurB_C_sf"/>
</dbReference>
<dbReference type="InterPro" id="IPR006094">
    <property type="entry name" value="Oxid_FAD_bind_N"/>
</dbReference>
<dbReference type="NCBIfam" id="TIGR00179">
    <property type="entry name" value="murB"/>
    <property type="match status" value="1"/>
</dbReference>
<dbReference type="NCBIfam" id="NF010480">
    <property type="entry name" value="PRK13905.1"/>
    <property type="match status" value="1"/>
</dbReference>
<dbReference type="PANTHER" id="PTHR21071">
    <property type="entry name" value="UDP-N-ACETYLENOLPYRUVOYLGLUCOSAMINE REDUCTASE"/>
    <property type="match status" value="1"/>
</dbReference>
<dbReference type="PANTHER" id="PTHR21071:SF4">
    <property type="entry name" value="UDP-N-ACETYLENOLPYRUVOYLGLUCOSAMINE REDUCTASE"/>
    <property type="match status" value="1"/>
</dbReference>
<dbReference type="Pfam" id="PF01565">
    <property type="entry name" value="FAD_binding_4"/>
    <property type="match status" value="1"/>
</dbReference>
<dbReference type="Pfam" id="PF02873">
    <property type="entry name" value="MurB_C"/>
    <property type="match status" value="1"/>
</dbReference>
<dbReference type="SUPFAM" id="SSF56176">
    <property type="entry name" value="FAD-binding/transporter-associated domain-like"/>
    <property type="match status" value="1"/>
</dbReference>
<dbReference type="SUPFAM" id="SSF56194">
    <property type="entry name" value="Uridine diphospho-N-Acetylenolpyruvylglucosamine reductase, MurB, C-terminal domain"/>
    <property type="match status" value="1"/>
</dbReference>
<dbReference type="PROSITE" id="PS51387">
    <property type="entry name" value="FAD_PCMH"/>
    <property type="match status" value="1"/>
</dbReference>
<comment type="function">
    <text evidence="1">Cell wall formation.</text>
</comment>
<comment type="catalytic activity">
    <reaction evidence="1">
        <text>UDP-N-acetyl-alpha-D-muramate + NADP(+) = UDP-N-acetyl-3-O-(1-carboxyvinyl)-alpha-D-glucosamine + NADPH + H(+)</text>
        <dbReference type="Rhea" id="RHEA:12248"/>
        <dbReference type="ChEBI" id="CHEBI:15378"/>
        <dbReference type="ChEBI" id="CHEBI:57783"/>
        <dbReference type="ChEBI" id="CHEBI:58349"/>
        <dbReference type="ChEBI" id="CHEBI:68483"/>
        <dbReference type="ChEBI" id="CHEBI:70757"/>
        <dbReference type="EC" id="1.3.1.98"/>
    </reaction>
</comment>
<comment type="cofactor">
    <cofactor evidence="1">
        <name>FAD</name>
        <dbReference type="ChEBI" id="CHEBI:57692"/>
    </cofactor>
</comment>
<comment type="pathway">
    <text evidence="1">Cell wall biogenesis; peptidoglycan biosynthesis.</text>
</comment>
<comment type="subcellular location">
    <subcellularLocation>
        <location evidence="1">Cytoplasm</location>
    </subcellularLocation>
</comment>
<comment type="similarity">
    <text evidence="1">Belongs to the MurB family.</text>
</comment>
<keyword id="KW-0131">Cell cycle</keyword>
<keyword id="KW-0132">Cell division</keyword>
<keyword id="KW-0133">Cell shape</keyword>
<keyword id="KW-0961">Cell wall biogenesis/degradation</keyword>
<keyword id="KW-0963">Cytoplasm</keyword>
<keyword id="KW-0274">FAD</keyword>
<keyword id="KW-0285">Flavoprotein</keyword>
<keyword id="KW-0521">NADP</keyword>
<keyword id="KW-0560">Oxidoreductase</keyword>
<keyword id="KW-0573">Peptidoglycan synthesis</keyword>
<keyword id="KW-1185">Reference proteome</keyword>
<name>MURB_CLOD6</name>
<reference key="1">
    <citation type="journal article" date="2006" name="Nat. Genet.">
        <title>The multidrug-resistant human pathogen Clostridium difficile has a highly mobile, mosaic genome.</title>
        <authorList>
            <person name="Sebaihia M."/>
            <person name="Wren B.W."/>
            <person name="Mullany P."/>
            <person name="Fairweather N.F."/>
            <person name="Minton N."/>
            <person name="Stabler R."/>
            <person name="Thomson N.R."/>
            <person name="Roberts A.P."/>
            <person name="Cerdeno-Tarraga A.M."/>
            <person name="Wang H."/>
            <person name="Holden M.T.G."/>
            <person name="Wright A."/>
            <person name="Churcher C."/>
            <person name="Quail M.A."/>
            <person name="Baker S."/>
            <person name="Bason N."/>
            <person name="Brooks K."/>
            <person name="Chillingworth T."/>
            <person name="Cronin A."/>
            <person name="Davis P."/>
            <person name="Dowd L."/>
            <person name="Fraser A."/>
            <person name="Feltwell T."/>
            <person name="Hance Z."/>
            <person name="Holroyd S."/>
            <person name="Jagels K."/>
            <person name="Moule S."/>
            <person name="Mungall K."/>
            <person name="Price C."/>
            <person name="Rabbinowitsch E."/>
            <person name="Sharp S."/>
            <person name="Simmonds M."/>
            <person name="Stevens K."/>
            <person name="Unwin L."/>
            <person name="Whithead S."/>
            <person name="Dupuy B."/>
            <person name="Dougan G."/>
            <person name="Barrell B."/>
            <person name="Parkhill J."/>
        </authorList>
    </citation>
    <scope>NUCLEOTIDE SEQUENCE [LARGE SCALE GENOMIC DNA]</scope>
    <source>
        <strain>630</strain>
    </source>
</reference>
<organism>
    <name type="scientific">Clostridioides difficile (strain 630)</name>
    <name type="common">Peptoclostridium difficile</name>
    <dbReference type="NCBI Taxonomy" id="272563"/>
    <lineage>
        <taxon>Bacteria</taxon>
        <taxon>Bacillati</taxon>
        <taxon>Bacillota</taxon>
        <taxon>Clostridia</taxon>
        <taxon>Peptostreptococcales</taxon>
        <taxon>Peptostreptococcaceae</taxon>
        <taxon>Clostridioides</taxon>
    </lineage>
</organism>
<evidence type="ECO:0000255" key="1">
    <source>
        <dbReference type="HAMAP-Rule" id="MF_00037"/>
    </source>
</evidence>
<gene>
    <name evidence="1" type="primary">murB</name>
    <name type="ordered locus">CD630_34020</name>
</gene>
<proteinExistence type="inferred from homology"/>
<accession>Q180P9</accession>
<feature type="chain" id="PRO_1000002881" description="UDP-N-acetylenolpyruvoylglucosamine reductase">
    <location>
        <begin position="1"/>
        <end position="304"/>
    </location>
</feature>
<feature type="domain" description="FAD-binding PCMH-type" evidence="1">
    <location>
        <begin position="32"/>
        <end position="198"/>
    </location>
</feature>
<feature type="active site" evidence="1">
    <location>
        <position position="177"/>
    </location>
</feature>
<feature type="active site" description="Proton donor" evidence="1">
    <location>
        <position position="227"/>
    </location>
</feature>
<feature type="active site" evidence="1">
    <location>
        <position position="297"/>
    </location>
</feature>